<name>DHKH_DICDI</name>
<reference key="1">
    <citation type="journal article" date="2005" name="Nature">
        <title>The genome of the social amoeba Dictyostelium discoideum.</title>
        <authorList>
            <person name="Eichinger L."/>
            <person name="Pachebat J.A."/>
            <person name="Gloeckner G."/>
            <person name="Rajandream M.A."/>
            <person name="Sucgang R."/>
            <person name="Berriman M."/>
            <person name="Song J."/>
            <person name="Olsen R."/>
            <person name="Szafranski K."/>
            <person name="Xu Q."/>
            <person name="Tunggal B."/>
            <person name="Kummerfeld S."/>
            <person name="Madera M."/>
            <person name="Konfortov B.A."/>
            <person name="Rivero F."/>
            <person name="Bankier A.T."/>
            <person name="Lehmann R."/>
            <person name="Hamlin N."/>
            <person name="Davies R."/>
            <person name="Gaudet P."/>
            <person name="Fey P."/>
            <person name="Pilcher K."/>
            <person name="Chen G."/>
            <person name="Saunders D."/>
            <person name="Sodergren E.J."/>
            <person name="Davis P."/>
            <person name="Kerhornou A."/>
            <person name="Nie X."/>
            <person name="Hall N."/>
            <person name="Anjard C."/>
            <person name="Hemphill L."/>
            <person name="Bason N."/>
            <person name="Farbrother P."/>
            <person name="Desany B."/>
            <person name="Just E."/>
            <person name="Morio T."/>
            <person name="Rost R."/>
            <person name="Churcher C.M."/>
            <person name="Cooper J."/>
            <person name="Haydock S."/>
            <person name="van Driessche N."/>
            <person name="Cronin A."/>
            <person name="Goodhead I."/>
            <person name="Muzny D.M."/>
            <person name="Mourier T."/>
            <person name="Pain A."/>
            <person name="Lu M."/>
            <person name="Harper D."/>
            <person name="Lindsay R."/>
            <person name="Hauser H."/>
            <person name="James K.D."/>
            <person name="Quiles M."/>
            <person name="Madan Babu M."/>
            <person name="Saito T."/>
            <person name="Buchrieser C."/>
            <person name="Wardroper A."/>
            <person name="Felder M."/>
            <person name="Thangavelu M."/>
            <person name="Johnson D."/>
            <person name="Knights A."/>
            <person name="Loulseged H."/>
            <person name="Mungall K.L."/>
            <person name="Oliver K."/>
            <person name="Price C."/>
            <person name="Quail M.A."/>
            <person name="Urushihara H."/>
            <person name="Hernandez J."/>
            <person name="Rabbinowitsch E."/>
            <person name="Steffen D."/>
            <person name="Sanders M."/>
            <person name="Ma J."/>
            <person name="Kohara Y."/>
            <person name="Sharp S."/>
            <person name="Simmonds M.N."/>
            <person name="Spiegler S."/>
            <person name="Tivey A."/>
            <person name="Sugano S."/>
            <person name="White B."/>
            <person name="Walker D."/>
            <person name="Woodward J.R."/>
            <person name="Winckler T."/>
            <person name="Tanaka Y."/>
            <person name="Shaulsky G."/>
            <person name="Schleicher M."/>
            <person name="Weinstock G.M."/>
            <person name="Rosenthal A."/>
            <person name="Cox E.C."/>
            <person name="Chisholm R.L."/>
            <person name="Gibbs R.A."/>
            <person name="Loomis W.F."/>
            <person name="Platzer M."/>
            <person name="Kay R.R."/>
            <person name="Williams J.G."/>
            <person name="Dear P.H."/>
            <person name="Noegel A.A."/>
            <person name="Barrell B.G."/>
            <person name="Kuspa A."/>
        </authorList>
    </citation>
    <scope>NUCLEOTIDE SEQUENCE [LARGE SCALE GENOMIC DNA]</scope>
    <source>
        <strain>AX4</strain>
    </source>
</reference>
<reference key="2">
    <citation type="book" date="2001" name="Histidine kinases in signal transduction">
        <title>The histidine kinases of Dictyostelium.</title>
        <editorList>
            <person name="Inouye M."/>
            <person name="Dutta R."/>
        </editorList>
        <authorList>
            <person name="Anjard C."/>
            <person name="Loomis W.F."/>
        </authorList>
    </citation>
    <scope>NUCLEOTIDE SEQUENCE [GENOMIC DNA] OF 231-1378</scope>
    <source>
        <strain>AX4</strain>
    </source>
</reference>
<sequence length="1378" mass="156521">MNIGDDKSEVDVIIDSSSITLNNNESSNNNTNIGDVLKFESGLYNSFECELINQVFNSVPIMMGVCDLYDNSNSDFQIQDSQNYDFKFVISNRCSYDNLHMFLDKGKGLDGHYSAKELHLPAYFITLWIENMLRSLRKKKSVKFMYPRYVDNGETPSSDDFYSQKIVWKKSTMCFMGQVLVPLDDINSNSNNNSNQKQTACRFFFTSEEVTKEKFKKEELINDFKSRLETLENKIDQRVDERIETRFKYVLESIPQMVWVTDNHGKIEFVNRQWKDYLGIDHSGQYLNWGSISYQQHNNNNNNNNNNNNNNNNNNNNNSNNKSPIINSPNTTSPTNTQIDFDSQWHYSLKEMKRFEMEILLQSMSGEYRWFLVRAEPYIEPNLGHPSSPLPSIISACVDNCDIMTDDNSSGILINNNNNIQQPYLNNDNISGDNVNNTPTCIDNNNNNIDGSNNSVNSTGTEQLDIKWIGTCTDVNDQKTAQDRIENAEKSKALFLQTMSHEMRTPLAGIMGINSWLSTSSPQLTSEQLDGCHTIDMCAEALLVLINNILDLSKLEENKIILEETEFYPTKIVEDSVDILSSQAEQKKLDIIFQLKYNCLSKVVGDFYRIRQVLTNLISNSVKFTPANGQIIVGCEIYHETTPSTRKRSSLDSIEITIPCNHNNSNNSNNNHNHNNNNNNNNHLNCSGSFNNNGFNHGHHHHHHHHHHHHHHHDKHCDQKIIVPGKYGKLLFWVIDNGIGIPEEGREKLFQTFSQYDASTTRKYGGSGLGLAISKRLTQLLGGDIWFESQKGKGSSFHFLVEVFFPDYPTIYNQQLQQQQQQPNLPHQFNIGTSAPQPIDSILTSYSSNNSNNNINNNNITTSVISQSPIVDKSNLCTYIFLLSTNQVLVNSLSQWINEWIGNATNNNNSNNDNNNNNTTSTTTTTTTTTATINTNINQQVKILYDIDSIEQISNSAIQSGKRLDFLFLIEDTFWNNYSDKISNSQEIIESLINQNYQQQQQQQQEQRQQHNIKNVILSFSNSAQIYGNSIILKKPIKYSPLKDCIYTNLLYFKSIYSVNSFDVIIATQMSSSVSPSSLSSSPSIQGLTNSSLSINNINISGNNSNNNINNNNNNSGSSTPKKLKKSNSDQSIHFSPSLTSSSLPSLDLNNNNNINNNNNINNNNNINNNNNNNNNNNNNNNNNNNNLNHYNSDSILSSDLSPQQHQYHHPNPLLANYQKKRRNSVVNDTDIPLEMTGIRYPLKIMVAEDSLVNQKVACRFLTKLGYKKEEIIFVVNGQQAIDHIENVEMVDVILMDMQMPEVDGCEATTRIRMRYPTTGPHIIGLTANAFNEDKDKCLLSGMCHYLAKPVKMDILAVELKRAWLIRNKFRVCLCAVL</sequence>
<proteinExistence type="inferred from homology"/>
<accession>Q54W36</accession>
<accession>Q95PH8</accession>
<keyword id="KW-0067">ATP-binding</keyword>
<keyword id="KW-0175">Coiled coil</keyword>
<keyword id="KW-0418">Kinase</keyword>
<keyword id="KW-0547">Nucleotide-binding</keyword>
<keyword id="KW-0597">Phosphoprotein</keyword>
<keyword id="KW-1185">Reference proteome</keyword>
<keyword id="KW-0807">Transducer</keyword>
<keyword id="KW-0808">Transferase</keyword>
<keyword id="KW-0902">Two-component regulatory system</keyword>
<comment type="function">
    <text evidence="1">Acts as a receptor histidine kinase for a signal transduction pathway. This protein undergoes an ATP-dependent autophosphorylation at a conserved histidine residue in the kinase core, and a phosphoryl group is then transferred to a conserved aspartate residue in the receiver domain (By similarity).</text>
</comment>
<comment type="catalytic activity">
    <reaction>
        <text>ATP + protein L-histidine = ADP + protein N-phospho-L-histidine.</text>
        <dbReference type="EC" id="2.7.13.3"/>
    </reaction>
</comment>
<comment type="PTM">
    <text evidence="1">Activation probably requires transfer of a phosphate group between a histidine in the kinase core (transmitter) domain and an aspartate of the receiver domain.</text>
</comment>
<comment type="sequence caution" evidence="7">
    <conflict type="frameshift">
        <sequence resource="EMBL-CDS" id="AAK54089"/>
    </conflict>
</comment>
<evidence type="ECO:0000250" key="1"/>
<evidence type="ECO:0000255" key="2"/>
<evidence type="ECO:0000255" key="3">
    <source>
        <dbReference type="PROSITE-ProRule" id="PRU00107"/>
    </source>
</evidence>
<evidence type="ECO:0000255" key="4">
    <source>
        <dbReference type="PROSITE-ProRule" id="PRU00140"/>
    </source>
</evidence>
<evidence type="ECO:0000255" key="5">
    <source>
        <dbReference type="PROSITE-ProRule" id="PRU00169"/>
    </source>
</evidence>
<evidence type="ECO:0000256" key="6">
    <source>
        <dbReference type="SAM" id="MobiDB-lite"/>
    </source>
</evidence>
<evidence type="ECO:0000305" key="7"/>
<protein>
    <recommendedName>
        <fullName>Hybrid signal transduction histidine kinase H</fullName>
        <ecNumber>2.7.13.3</ecNumber>
    </recommendedName>
</protein>
<gene>
    <name type="primary">dhkH</name>
    <name type="ORF">DDB_G0279913</name>
</gene>
<dbReference type="EC" id="2.7.13.3"/>
<dbReference type="EMBL" id="AAFI02000035">
    <property type="protein sequence ID" value="EAL67428.1"/>
    <property type="molecule type" value="Genomic_DNA"/>
</dbReference>
<dbReference type="EMBL" id="AF362370">
    <property type="protein sequence ID" value="AAK54089.2"/>
    <property type="status" value="ALT_FRAME"/>
    <property type="molecule type" value="Genomic_DNA"/>
</dbReference>
<dbReference type="RefSeq" id="XP_641414.1">
    <property type="nucleotide sequence ID" value="XM_636322.1"/>
</dbReference>
<dbReference type="SMR" id="Q54W36"/>
<dbReference type="STRING" id="44689.Q54W36"/>
<dbReference type="PaxDb" id="44689-DDB0219944"/>
<dbReference type="EnsemblProtists" id="EAL67428">
    <property type="protein sequence ID" value="EAL67428"/>
    <property type="gene ID" value="DDB_G0279913"/>
</dbReference>
<dbReference type="GeneID" id="8622297"/>
<dbReference type="KEGG" id="ddi:DDB_G0279913"/>
<dbReference type="dictyBase" id="DDB_G0279913">
    <property type="gene designation" value="dhkH"/>
</dbReference>
<dbReference type="VEuPathDB" id="AmoebaDB:DDB_G0279913"/>
<dbReference type="eggNOG" id="KOG0519">
    <property type="taxonomic scope" value="Eukaryota"/>
</dbReference>
<dbReference type="HOGENOM" id="CLU_255816_0_0_1"/>
<dbReference type="InParanoid" id="Q54W36"/>
<dbReference type="OMA" id="QTMSHEM"/>
<dbReference type="PRO" id="PR:Q54W36"/>
<dbReference type="Proteomes" id="UP000002195">
    <property type="component" value="Chromosome 3"/>
</dbReference>
<dbReference type="GO" id="GO:0005886">
    <property type="term" value="C:plasma membrane"/>
    <property type="evidence" value="ECO:0000318"/>
    <property type="project" value="GO_Central"/>
</dbReference>
<dbReference type="GO" id="GO:0005524">
    <property type="term" value="F:ATP binding"/>
    <property type="evidence" value="ECO:0007669"/>
    <property type="project" value="UniProtKB-KW"/>
</dbReference>
<dbReference type="GO" id="GO:0009927">
    <property type="term" value="F:histidine phosphotransfer kinase activity"/>
    <property type="evidence" value="ECO:0000318"/>
    <property type="project" value="GO_Central"/>
</dbReference>
<dbReference type="GO" id="GO:0000155">
    <property type="term" value="F:phosphorelay sensor kinase activity"/>
    <property type="evidence" value="ECO:0000318"/>
    <property type="project" value="GO_Central"/>
</dbReference>
<dbReference type="GO" id="GO:0000160">
    <property type="term" value="P:phosphorelay signal transduction system"/>
    <property type="evidence" value="ECO:0000318"/>
    <property type="project" value="GO_Central"/>
</dbReference>
<dbReference type="CDD" id="cd16922">
    <property type="entry name" value="HATPase_EvgS-ArcB-TorS-like"/>
    <property type="match status" value="1"/>
</dbReference>
<dbReference type="CDD" id="cd00082">
    <property type="entry name" value="HisKA"/>
    <property type="match status" value="1"/>
</dbReference>
<dbReference type="CDD" id="cd17546">
    <property type="entry name" value="REC_hyHK_CKI1_RcsC-like"/>
    <property type="match status" value="1"/>
</dbReference>
<dbReference type="FunFam" id="3.30.565.10:FF:000366">
    <property type="entry name" value="Hybrid signal transduction histidine kinase H"/>
    <property type="match status" value="2"/>
</dbReference>
<dbReference type="FunFam" id="3.40.50.2300:FF:000383">
    <property type="entry name" value="Sensor histidine kinase"/>
    <property type="match status" value="1"/>
</dbReference>
<dbReference type="Gene3D" id="1.10.287.130">
    <property type="match status" value="1"/>
</dbReference>
<dbReference type="Gene3D" id="3.40.50.2300">
    <property type="match status" value="1"/>
</dbReference>
<dbReference type="Gene3D" id="3.30.565.10">
    <property type="entry name" value="Histidine kinase-like ATPase, C-terminal domain"/>
    <property type="match status" value="1"/>
</dbReference>
<dbReference type="Gene3D" id="3.30.450.20">
    <property type="entry name" value="PAS domain"/>
    <property type="match status" value="1"/>
</dbReference>
<dbReference type="InterPro" id="IPR011006">
    <property type="entry name" value="CheY-like_superfamily"/>
</dbReference>
<dbReference type="InterPro" id="IPR036890">
    <property type="entry name" value="HATPase_C_sf"/>
</dbReference>
<dbReference type="InterPro" id="IPR005467">
    <property type="entry name" value="His_kinase_dom"/>
</dbReference>
<dbReference type="InterPro" id="IPR003661">
    <property type="entry name" value="HisK_dim/P_dom"/>
</dbReference>
<dbReference type="InterPro" id="IPR036097">
    <property type="entry name" value="HisK_dim/P_sf"/>
</dbReference>
<dbReference type="InterPro" id="IPR000014">
    <property type="entry name" value="PAS"/>
</dbReference>
<dbReference type="InterPro" id="IPR035965">
    <property type="entry name" value="PAS-like_dom_sf"/>
</dbReference>
<dbReference type="InterPro" id="IPR004358">
    <property type="entry name" value="Sig_transdc_His_kin-like_C"/>
</dbReference>
<dbReference type="InterPro" id="IPR001789">
    <property type="entry name" value="Sig_transdc_resp-reg_receiver"/>
</dbReference>
<dbReference type="PANTHER" id="PTHR43047:SF72">
    <property type="entry name" value="OSMOSENSING HISTIDINE PROTEIN KINASE SLN1"/>
    <property type="match status" value="1"/>
</dbReference>
<dbReference type="PANTHER" id="PTHR43047">
    <property type="entry name" value="TWO-COMPONENT HISTIDINE PROTEIN KINASE"/>
    <property type="match status" value="1"/>
</dbReference>
<dbReference type="Pfam" id="PF02518">
    <property type="entry name" value="HATPase_c"/>
    <property type="match status" value="1"/>
</dbReference>
<dbReference type="Pfam" id="PF00512">
    <property type="entry name" value="HisKA"/>
    <property type="match status" value="1"/>
</dbReference>
<dbReference type="Pfam" id="PF13188">
    <property type="entry name" value="PAS_8"/>
    <property type="match status" value="1"/>
</dbReference>
<dbReference type="Pfam" id="PF00072">
    <property type="entry name" value="Response_reg"/>
    <property type="match status" value="1"/>
</dbReference>
<dbReference type="PRINTS" id="PR00344">
    <property type="entry name" value="BCTRLSENSOR"/>
</dbReference>
<dbReference type="SMART" id="SM00387">
    <property type="entry name" value="HATPase_c"/>
    <property type="match status" value="1"/>
</dbReference>
<dbReference type="SMART" id="SM00388">
    <property type="entry name" value="HisKA"/>
    <property type="match status" value="1"/>
</dbReference>
<dbReference type="SMART" id="SM00448">
    <property type="entry name" value="REC"/>
    <property type="match status" value="1"/>
</dbReference>
<dbReference type="SUPFAM" id="SSF55874">
    <property type="entry name" value="ATPase domain of HSP90 chaperone/DNA topoisomerase II/histidine kinase"/>
    <property type="match status" value="1"/>
</dbReference>
<dbReference type="SUPFAM" id="SSF52172">
    <property type="entry name" value="CheY-like"/>
    <property type="match status" value="1"/>
</dbReference>
<dbReference type="SUPFAM" id="SSF47384">
    <property type="entry name" value="Homodimeric domain of signal transducing histidine kinase"/>
    <property type="match status" value="1"/>
</dbReference>
<dbReference type="SUPFAM" id="SSF55785">
    <property type="entry name" value="PYP-like sensor domain (PAS domain)"/>
    <property type="match status" value="1"/>
</dbReference>
<dbReference type="PROSITE" id="PS50109">
    <property type="entry name" value="HIS_KIN"/>
    <property type="match status" value="1"/>
</dbReference>
<dbReference type="PROSITE" id="PS50112">
    <property type="entry name" value="PAS"/>
    <property type="match status" value="1"/>
</dbReference>
<dbReference type="PROSITE" id="PS50110">
    <property type="entry name" value="RESPONSE_REGULATORY"/>
    <property type="match status" value="1"/>
</dbReference>
<organism>
    <name type="scientific">Dictyostelium discoideum</name>
    <name type="common">Social amoeba</name>
    <dbReference type="NCBI Taxonomy" id="44689"/>
    <lineage>
        <taxon>Eukaryota</taxon>
        <taxon>Amoebozoa</taxon>
        <taxon>Evosea</taxon>
        <taxon>Eumycetozoa</taxon>
        <taxon>Dictyostelia</taxon>
        <taxon>Dictyosteliales</taxon>
        <taxon>Dictyosteliaceae</taxon>
        <taxon>Dictyostelium</taxon>
    </lineage>
</organism>
<feature type="chain" id="PRO_0000328338" description="Hybrid signal transduction histidine kinase H">
    <location>
        <begin position="1"/>
        <end position="1378"/>
    </location>
</feature>
<feature type="domain" description="PAS" evidence="4">
    <location>
        <begin position="243"/>
        <end position="314"/>
    </location>
</feature>
<feature type="domain" description="Histidine kinase" evidence="3">
    <location>
        <begin position="498"/>
        <end position="805"/>
    </location>
</feature>
<feature type="domain" description="Response regulatory" evidence="5">
    <location>
        <begin position="1244"/>
        <end position="1364"/>
    </location>
</feature>
<feature type="region of interest" description="Disordered" evidence="6">
    <location>
        <begin position="294"/>
        <end position="337"/>
    </location>
</feature>
<feature type="region of interest" description="Disordered" evidence="6">
    <location>
        <begin position="663"/>
        <end position="717"/>
    </location>
</feature>
<feature type="region of interest" description="Disordered" evidence="6">
    <location>
        <begin position="905"/>
        <end position="924"/>
    </location>
</feature>
<feature type="region of interest" description="Disordered" evidence="6">
    <location>
        <begin position="1103"/>
        <end position="1213"/>
    </location>
</feature>
<feature type="coiled-coil region" evidence="2">
    <location>
        <begin position="212"/>
        <end position="242"/>
    </location>
</feature>
<feature type="compositionally biased region" description="Low complexity" evidence="6">
    <location>
        <begin position="298"/>
        <end position="337"/>
    </location>
</feature>
<feature type="compositionally biased region" description="Low complexity" evidence="6">
    <location>
        <begin position="663"/>
        <end position="696"/>
    </location>
</feature>
<feature type="compositionally biased region" description="Basic residues" evidence="6">
    <location>
        <begin position="697"/>
        <end position="714"/>
    </location>
</feature>
<feature type="compositionally biased region" description="Low complexity" evidence="6">
    <location>
        <begin position="1103"/>
        <end position="1119"/>
    </location>
</feature>
<feature type="compositionally biased region" description="Low complexity" evidence="6">
    <location>
        <begin position="1136"/>
        <end position="1187"/>
    </location>
</feature>
<feature type="compositionally biased region" description="Polar residues" evidence="6">
    <location>
        <begin position="1188"/>
        <end position="1206"/>
    </location>
</feature>
<feature type="modified residue" description="Phosphohistidine; by autocatalysis" evidence="3">
    <location>
        <position position="501"/>
    </location>
</feature>
<feature type="modified residue" description="4-aspartylphosphate" evidence="5">
    <location>
        <position position="1297"/>
    </location>
</feature>
<feature type="sequence conflict" description="In Ref. 2; AAK54089." evidence="7" ref="2">
    <original>N</original>
    <variation>T</variation>
    <location>
        <position position="685"/>
    </location>
</feature>
<feature type="sequence conflict" description="In Ref. 2; AAK54089." evidence="7" ref="2">
    <location>
        <begin position="699"/>
        <end position="700"/>
    </location>
</feature>
<feature type="sequence conflict" description="In Ref. 2; AAK54089." evidence="7" ref="2">
    <original>L</original>
    <variation>F</variation>
    <location>
        <position position="1339"/>
    </location>
</feature>
<feature type="sequence conflict" description="In Ref. 2; AAK54089." evidence="7" ref="2">
    <original>R</original>
    <variation>G</variation>
    <location>
        <position position="1367"/>
    </location>
</feature>